<keyword id="KW-0878">Amphibian defense peptide</keyword>
<keyword id="KW-0903">Direct protein sequencing</keyword>
<keyword id="KW-0964">Secreted</keyword>
<comment type="subcellular location">
    <subcellularLocation>
        <location>Secreted</location>
    </subcellularLocation>
</comment>
<comment type="tissue specificity">
    <text>Expressed by the dorsal and submental skin glands.</text>
</comment>
<dbReference type="GO" id="GO:0005576">
    <property type="term" value="C:extracellular region"/>
    <property type="evidence" value="ECO:0007669"/>
    <property type="project" value="UniProtKB-SubCell"/>
</dbReference>
<dbReference type="GO" id="GO:0006952">
    <property type="term" value="P:defense response"/>
    <property type="evidence" value="ECO:0007669"/>
    <property type="project" value="UniProtKB-KW"/>
</dbReference>
<dbReference type="InterPro" id="IPR013157">
    <property type="entry name" value="Aurein_antimicrobial_peptide"/>
</dbReference>
<dbReference type="Pfam" id="PF08256">
    <property type="entry name" value="Antimicrobial20"/>
    <property type="match status" value="1"/>
</dbReference>
<reference key="1">
    <citation type="journal article" date="1999" name="Eur. J. Biochem.">
        <title>Host defence peptides from the skin glands of the Australian blue mountains tree-frog Litoria citropa. Solution structure of the antibacterial peptide citropin 1.1.</title>
        <authorList>
            <person name="Wegener K.L."/>
            <person name="Wabnitz P.A."/>
            <person name="Carver J.A."/>
            <person name="Bowie J.H."/>
            <person name="Chia B.C.S."/>
            <person name="Wallace J.C."/>
            <person name="Tyler M.J."/>
        </authorList>
    </citation>
    <scope>PROTEIN SEQUENCE</scope>
    <source>
        <tissue>Skin secretion</tissue>
    </source>
</reference>
<proteinExistence type="evidence at protein level"/>
<sequence>GLFDVIKKVASVIGLASQ</sequence>
<name>CT114_RANCI</name>
<protein>
    <recommendedName>
        <fullName>Citropin-1.1.4</fullName>
    </recommendedName>
</protein>
<accession>P81839</accession>
<feature type="peptide" id="PRO_0000043769" description="Citropin-1.1.4">
    <location>
        <begin position="1"/>
        <end position="18"/>
    </location>
</feature>
<organism>
    <name type="scientific">Ranoidea citropa</name>
    <name type="common">Australian Blue Mountains tree frog</name>
    <name type="synonym">Litoria citropa</name>
    <dbReference type="NCBI Taxonomy" id="94770"/>
    <lineage>
        <taxon>Eukaryota</taxon>
        <taxon>Metazoa</taxon>
        <taxon>Chordata</taxon>
        <taxon>Craniata</taxon>
        <taxon>Vertebrata</taxon>
        <taxon>Euteleostomi</taxon>
        <taxon>Amphibia</taxon>
        <taxon>Batrachia</taxon>
        <taxon>Anura</taxon>
        <taxon>Neobatrachia</taxon>
        <taxon>Hyloidea</taxon>
        <taxon>Hylidae</taxon>
        <taxon>Pelodryadinae</taxon>
        <taxon>Ranoidea</taxon>
    </lineage>
</organism>